<gene>
    <name type="primary">SNX32</name>
    <name type="synonym">SNX6B</name>
</gene>
<accession>Q86XE0</accession>
<accession>Q8IW53</accession>
<accession>Q96NG4</accession>
<organism>
    <name type="scientific">Homo sapiens</name>
    <name type="common">Human</name>
    <dbReference type="NCBI Taxonomy" id="9606"/>
    <lineage>
        <taxon>Eukaryota</taxon>
        <taxon>Metazoa</taxon>
        <taxon>Chordata</taxon>
        <taxon>Craniata</taxon>
        <taxon>Vertebrata</taxon>
        <taxon>Euteleostomi</taxon>
        <taxon>Mammalia</taxon>
        <taxon>Eutheria</taxon>
        <taxon>Euarchontoglires</taxon>
        <taxon>Primates</taxon>
        <taxon>Haplorrhini</taxon>
        <taxon>Catarrhini</taxon>
        <taxon>Hominidae</taxon>
        <taxon>Homo</taxon>
    </lineage>
</organism>
<comment type="function">
    <text evidence="1">May be involved in several stages of intracellular trafficking.</text>
</comment>
<comment type="interaction">
    <interactant intactId="EBI-8099743">
        <id>Q86XE0</id>
    </interactant>
    <interactant intactId="EBI-7317823">
        <id>Q6P5X5</id>
        <label>C22orf39</label>
    </interactant>
    <organismsDiffer>false</organismsDiffer>
    <experiments>3</experiments>
</comment>
<comment type="interaction">
    <interactant intactId="EBI-8099743">
        <id>Q86XE0</id>
    </interactant>
    <interactant intactId="EBI-12112376">
        <id>A0A0C4DGQ7</id>
        <label>EML2</label>
    </interactant>
    <organismsDiffer>false</organismsDiffer>
    <experiments>3</experiments>
</comment>
<comment type="interaction">
    <interactant intactId="EBI-8099743">
        <id>Q86XE0</id>
    </interactant>
    <interactant intactId="EBI-5235612">
        <id>A8MXD5</id>
        <label>GRXCR1</label>
    </interactant>
    <organismsDiffer>false</organismsDiffer>
    <experiments>3</experiments>
</comment>
<comment type="interaction">
    <interactant intactId="EBI-8099743">
        <id>Q86XE0</id>
    </interactant>
    <interactant intactId="EBI-743811">
        <id>Q8NEH6</id>
        <label>MNS1</label>
    </interactant>
    <organismsDiffer>false</organismsDiffer>
    <experiments>3</experiments>
</comment>
<comment type="interaction">
    <interactant intactId="EBI-8099743">
        <id>Q86XE0</id>
    </interactant>
    <interactant intactId="EBI-744782">
        <id>Q9Y5B8</id>
        <label>NME7</label>
    </interactant>
    <organismsDiffer>false</organismsDiffer>
    <experiments>5</experiments>
</comment>
<comment type="interaction">
    <interactant intactId="EBI-8099743">
        <id>Q86XE0</id>
    </interactant>
    <interactant intactId="EBI-2822329">
        <id>Q13596</id>
        <label>SNX1</label>
    </interactant>
    <organismsDiffer>false</organismsDiffer>
    <experiments>13</experiments>
</comment>
<comment type="interaction">
    <interactant intactId="EBI-8099743">
        <id>Q86XE0</id>
    </interactant>
    <interactant intactId="EBI-1046690">
        <id>O60749</id>
        <label>SNX2</label>
    </interactant>
    <organismsDiffer>false</organismsDiffer>
    <experiments>6</experiments>
</comment>
<comment type="interaction">
    <interactant intactId="EBI-8099743">
        <id>Q86XE0</id>
    </interactant>
    <interactant intactId="EBI-17197485">
        <id>Q9NS25</id>
        <label>SPANXB1</label>
    </interactant>
    <organismsDiffer>false</organismsDiffer>
    <experiments>3</experiments>
</comment>
<comment type="interaction">
    <interactant intactId="EBI-8099743">
        <id>Q86XE0</id>
    </interactant>
    <interactant intactId="EBI-1105213">
        <id>Q9UBB9</id>
        <label>TFIP11</label>
    </interactant>
    <organismsDiffer>false</organismsDiffer>
    <experiments>3</experiments>
</comment>
<comment type="alternative products">
    <event type="alternative splicing"/>
    <isoform>
        <id>Q86XE0-1</id>
        <name>1</name>
        <sequence type="displayed"/>
    </isoform>
    <isoform>
        <id>Q86XE0-2</id>
        <name>2</name>
        <sequence type="described" ref="VSP_031742 VSP_031743"/>
    </isoform>
</comment>
<comment type="similarity">
    <text evidence="6">Belongs to the sorting nexin family.</text>
</comment>
<dbReference type="EMBL" id="AK055496">
    <property type="protein sequence ID" value="BAB70935.1"/>
    <property type="molecule type" value="mRNA"/>
</dbReference>
<dbReference type="EMBL" id="AK289587">
    <property type="protein sequence ID" value="BAF82276.1"/>
    <property type="molecule type" value="mRNA"/>
</dbReference>
<dbReference type="EMBL" id="CH471076">
    <property type="protein sequence ID" value="EAW74441.1"/>
    <property type="molecule type" value="Genomic_DNA"/>
</dbReference>
<dbReference type="EMBL" id="BC040981">
    <property type="protein sequence ID" value="AAH40981.1"/>
    <property type="molecule type" value="mRNA"/>
</dbReference>
<dbReference type="EMBL" id="BC045563">
    <property type="protein sequence ID" value="AAH45563.1"/>
    <property type="molecule type" value="mRNA"/>
</dbReference>
<dbReference type="CCDS" id="CCDS8113.2">
    <molecule id="Q86XE0-1"/>
</dbReference>
<dbReference type="RefSeq" id="NP_689973.2">
    <molecule id="Q86XE0-1"/>
    <property type="nucleotide sequence ID" value="NM_152760.3"/>
</dbReference>
<dbReference type="PDB" id="6E8R">
    <property type="method" value="X-ray"/>
    <property type="resolution" value="2.27 A"/>
    <property type="chains" value="A/B=17-166"/>
</dbReference>
<dbReference type="PDBsum" id="6E8R"/>
<dbReference type="SMR" id="Q86XE0"/>
<dbReference type="BioGRID" id="129016">
    <property type="interactions" value="31"/>
</dbReference>
<dbReference type="ComplexPortal" id="CPX-8837">
    <property type="entry name" value="SNX1-SNX32 sorting nexin complex"/>
</dbReference>
<dbReference type="ComplexPortal" id="CPX-8840">
    <property type="entry name" value="SNX2-SNX32 sorting nexin complex"/>
</dbReference>
<dbReference type="FunCoup" id="Q86XE0">
    <property type="interactions" value="487"/>
</dbReference>
<dbReference type="IntAct" id="Q86XE0">
    <property type="interactions" value="20"/>
</dbReference>
<dbReference type="MINT" id="Q86XE0"/>
<dbReference type="STRING" id="9606.ENSP00000310620"/>
<dbReference type="TCDB" id="3.A.34.1.1">
    <property type="family name" value="the sorting nexins of the escrt complexes (sn-escrt)"/>
</dbReference>
<dbReference type="GlyGen" id="Q86XE0">
    <property type="glycosylation" value="2 sites, 1 O-linked glycan (2 sites)"/>
</dbReference>
<dbReference type="iPTMnet" id="Q86XE0"/>
<dbReference type="PhosphoSitePlus" id="Q86XE0"/>
<dbReference type="BioMuta" id="SNX32"/>
<dbReference type="DMDM" id="74727816"/>
<dbReference type="jPOST" id="Q86XE0"/>
<dbReference type="MassIVE" id="Q86XE0"/>
<dbReference type="PaxDb" id="9606-ENSP00000310620"/>
<dbReference type="PeptideAtlas" id="Q86XE0"/>
<dbReference type="ProteomicsDB" id="70267">
    <molecule id="Q86XE0-1"/>
</dbReference>
<dbReference type="ProteomicsDB" id="70268">
    <molecule id="Q86XE0-2"/>
</dbReference>
<dbReference type="Antibodypedia" id="29952">
    <property type="antibodies" value="122 antibodies from 21 providers"/>
</dbReference>
<dbReference type="DNASU" id="254122"/>
<dbReference type="Ensembl" id="ENST00000308342.7">
    <molecule id="Q86XE0-1"/>
    <property type="protein sequence ID" value="ENSP00000310620.6"/>
    <property type="gene ID" value="ENSG00000172803.18"/>
</dbReference>
<dbReference type="GeneID" id="254122"/>
<dbReference type="KEGG" id="hsa:254122"/>
<dbReference type="MANE-Select" id="ENST00000308342.7">
    <property type="protein sequence ID" value="ENSP00000310620.6"/>
    <property type="RefSeq nucleotide sequence ID" value="NM_152760.3"/>
    <property type="RefSeq protein sequence ID" value="NP_689973.2"/>
</dbReference>
<dbReference type="UCSC" id="uc001ofr.4">
    <molecule id="Q86XE0-1"/>
    <property type="organism name" value="human"/>
</dbReference>
<dbReference type="AGR" id="HGNC:26423"/>
<dbReference type="CTD" id="254122"/>
<dbReference type="DisGeNET" id="254122"/>
<dbReference type="GeneCards" id="SNX32"/>
<dbReference type="HGNC" id="HGNC:26423">
    <property type="gene designation" value="SNX32"/>
</dbReference>
<dbReference type="HPA" id="ENSG00000172803">
    <property type="expression patterns" value="Tissue enriched (brain)"/>
</dbReference>
<dbReference type="MIM" id="621073">
    <property type="type" value="gene"/>
</dbReference>
<dbReference type="neXtProt" id="NX_Q86XE0"/>
<dbReference type="OpenTargets" id="ENSG00000172803"/>
<dbReference type="PharmGKB" id="PA162404314"/>
<dbReference type="VEuPathDB" id="HostDB:ENSG00000172803"/>
<dbReference type="eggNOG" id="KOG1660">
    <property type="taxonomic scope" value="Eukaryota"/>
</dbReference>
<dbReference type="GeneTree" id="ENSGT00940000162773"/>
<dbReference type="HOGENOM" id="CLU_040966_0_0_1"/>
<dbReference type="InParanoid" id="Q86XE0"/>
<dbReference type="OMA" id="ETHQQLC"/>
<dbReference type="OrthoDB" id="9976382at2759"/>
<dbReference type="PAN-GO" id="Q86XE0">
    <property type="GO annotations" value="2 GO annotations based on evolutionary models"/>
</dbReference>
<dbReference type="PhylomeDB" id="Q86XE0"/>
<dbReference type="TreeFam" id="TF313698"/>
<dbReference type="PathwayCommons" id="Q86XE0"/>
<dbReference type="SignaLink" id="Q86XE0"/>
<dbReference type="BioGRID-ORCS" id="254122">
    <property type="hits" value="33 hits in 1150 CRISPR screens"/>
</dbReference>
<dbReference type="ChiTaRS" id="SNX32">
    <property type="organism name" value="human"/>
</dbReference>
<dbReference type="GenomeRNAi" id="254122"/>
<dbReference type="Pharos" id="Q86XE0">
    <property type="development level" value="Tdark"/>
</dbReference>
<dbReference type="PRO" id="PR:Q86XE0"/>
<dbReference type="Proteomes" id="UP000005640">
    <property type="component" value="Chromosome 11"/>
</dbReference>
<dbReference type="RNAct" id="Q86XE0">
    <property type="molecule type" value="protein"/>
</dbReference>
<dbReference type="Bgee" id="ENSG00000172803">
    <property type="expression patterns" value="Expressed in right frontal lobe and 101 other cell types or tissues"/>
</dbReference>
<dbReference type="GO" id="GO:0005829">
    <property type="term" value="C:cytosol"/>
    <property type="evidence" value="ECO:0007669"/>
    <property type="project" value="GOC"/>
</dbReference>
<dbReference type="GO" id="GO:0005768">
    <property type="term" value="C:endosome"/>
    <property type="evidence" value="ECO:0000318"/>
    <property type="project" value="GO_Central"/>
</dbReference>
<dbReference type="GO" id="GO:0035091">
    <property type="term" value="F:phosphatidylinositol binding"/>
    <property type="evidence" value="ECO:0007669"/>
    <property type="project" value="InterPro"/>
</dbReference>
<dbReference type="GO" id="GO:0015031">
    <property type="term" value="P:protein transport"/>
    <property type="evidence" value="ECO:0007669"/>
    <property type="project" value="UniProtKB-KW"/>
</dbReference>
<dbReference type="GO" id="GO:0016241">
    <property type="term" value="P:regulation of macroautophagy"/>
    <property type="evidence" value="ECO:0000303"/>
    <property type="project" value="ParkinsonsUK-UCL"/>
</dbReference>
<dbReference type="GO" id="GO:0042147">
    <property type="term" value="P:retrograde transport, endosome to Golgi"/>
    <property type="evidence" value="ECO:0000318"/>
    <property type="project" value="GO_Central"/>
</dbReference>
<dbReference type="CDD" id="cd07621">
    <property type="entry name" value="BAR_SNX5_6"/>
    <property type="match status" value="1"/>
</dbReference>
<dbReference type="FunFam" id="1.20.1270.60:FF:000008">
    <property type="entry name" value="Sorting nexin"/>
    <property type="match status" value="1"/>
</dbReference>
<dbReference type="FunFam" id="3.30.1520.10:FF:000001">
    <property type="entry name" value="Sorting nexin"/>
    <property type="match status" value="1"/>
</dbReference>
<dbReference type="Gene3D" id="1.20.1270.60">
    <property type="entry name" value="Arfaptin homology (AH) domain/BAR domain"/>
    <property type="match status" value="1"/>
</dbReference>
<dbReference type="Gene3D" id="3.30.1520.10">
    <property type="entry name" value="Phox-like domain"/>
    <property type="match status" value="1"/>
</dbReference>
<dbReference type="InterPro" id="IPR027267">
    <property type="entry name" value="AH/BAR_dom_sf"/>
</dbReference>
<dbReference type="InterPro" id="IPR001683">
    <property type="entry name" value="PX_dom"/>
</dbReference>
<dbReference type="InterPro" id="IPR036871">
    <property type="entry name" value="PX_dom_sf"/>
</dbReference>
<dbReference type="InterPro" id="IPR014637">
    <property type="entry name" value="SNX5/SNX6/SNX32"/>
</dbReference>
<dbReference type="InterPro" id="IPR015404">
    <property type="entry name" value="Vps5_C"/>
</dbReference>
<dbReference type="PANTHER" id="PTHR45850">
    <property type="entry name" value="SORTING NEXIN FAMILY MEMBER"/>
    <property type="match status" value="1"/>
</dbReference>
<dbReference type="PANTHER" id="PTHR45850:SF3">
    <property type="entry name" value="SORTING NEXIN-32"/>
    <property type="match status" value="1"/>
</dbReference>
<dbReference type="Pfam" id="PF00787">
    <property type="entry name" value="PX"/>
    <property type="match status" value="1"/>
</dbReference>
<dbReference type="Pfam" id="PF09325">
    <property type="entry name" value="Vps5"/>
    <property type="match status" value="1"/>
</dbReference>
<dbReference type="PIRSF" id="PIRSF036924">
    <property type="entry name" value="Snx5_Snx6"/>
    <property type="match status" value="1"/>
</dbReference>
<dbReference type="SUPFAM" id="SSF64268">
    <property type="entry name" value="PX domain"/>
    <property type="match status" value="1"/>
</dbReference>
<dbReference type="PROSITE" id="PS50195">
    <property type="entry name" value="PX"/>
    <property type="match status" value="1"/>
</dbReference>
<feature type="chain" id="PRO_0000320707" description="Sorting nexin-32">
    <location>
        <begin position="1"/>
        <end position="403"/>
    </location>
</feature>
<feature type="domain" description="PX" evidence="3">
    <location>
        <begin position="20"/>
        <end position="168"/>
    </location>
</feature>
<feature type="coiled-coil region" evidence="2">
    <location>
        <begin position="258"/>
        <end position="335"/>
    </location>
</feature>
<feature type="splice variant" id="VSP_031742" description="In isoform 2." evidence="5">
    <original>LADDYIPISAALSSLGTQEVNQLRTSFLKLAELFERLRKL</original>
    <variation>TQGPRGPGSPCPSPQRFNSLGERREQGVPCCLSVATSTKA</variation>
    <location>
        <begin position="238"/>
        <end position="277"/>
    </location>
</feature>
<feature type="splice variant" id="VSP_031743" description="In isoform 2." evidence="5">
    <location>
        <begin position="278"/>
        <end position="403"/>
    </location>
</feature>
<feature type="sequence variant" id="VAR_039298" description="In dbSNP:rs17854065." evidence="4">
    <original>H</original>
    <variation>N</variation>
    <location>
        <position position="155"/>
    </location>
</feature>
<feature type="sequence variant" id="VAR_039299" description="In dbSNP:rs17855647." evidence="4">
    <original>A</original>
    <variation>V</variation>
    <location>
        <position position="282"/>
    </location>
</feature>
<feature type="sequence variant" id="VAR_039300" description="In dbSNP:rs17857243." evidence="4">
    <original>S</original>
    <variation>Y</variation>
    <location>
        <position position="354"/>
    </location>
</feature>
<feature type="sequence conflict" description="In Ref. 1; BAB70935." evidence="6" ref="1">
    <original>S</original>
    <variation>P</variation>
    <location>
        <position position="14"/>
    </location>
</feature>
<feature type="strand" evidence="7">
    <location>
        <begin position="26"/>
        <end position="35"/>
    </location>
</feature>
<feature type="strand" evidence="7">
    <location>
        <begin position="40"/>
        <end position="48"/>
    </location>
</feature>
<feature type="strand" evidence="7">
    <location>
        <begin position="53"/>
        <end position="63"/>
    </location>
</feature>
<feature type="helix" evidence="7">
    <location>
        <begin position="64"/>
        <end position="76"/>
    </location>
</feature>
<feature type="helix" evidence="7">
    <location>
        <begin position="78"/>
        <end position="80"/>
    </location>
</feature>
<feature type="helix" evidence="7">
    <location>
        <begin position="95"/>
        <end position="106"/>
    </location>
</feature>
<feature type="helix" evidence="7">
    <location>
        <begin position="113"/>
        <end position="147"/>
    </location>
</feature>
<feature type="helix" evidence="7">
    <location>
        <begin position="151"/>
        <end position="153"/>
    </location>
</feature>
<feature type="helix" evidence="7">
    <location>
        <begin position="155"/>
        <end position="162"/>
    </location>
</feature>
<name>SNX32_HUMAN</name>
<sequence length="403" mass="46399">METYAEVGKEGKPSCASVDLQGDSSLQVEISDAVSERDKVKFTVQTKSCLPHFAQTEFSVVRQHEEFIWLHDAYVENEEYAGLIIPPAPPRPDFEASREKLQKLGEGDSSVTREEFAKMKQELEAEYLAIFKKTVAMHEVFLQRLAAHPTLRRDHNFFVFLEYGQDLSVRGKNRKELLGGFLRNIVKSADEALITGMSGLKEVDDFFEHERTFLLEYHTRIRDACLRADRVMRAHKCLADDYIPISAALSSLGTQEVNQLRTSFLKLAELFERLRKLEGRVASDEDLKLSDMLRYYMRDSQAAKDLLYRRLRALADYENANKALDKARTRNREVRPAESHQQLCCQRFERLSDSAKQELMDFKSRRVSSFRKNLIELAELELKHAKASTLILRNTLVALKGEP</sequence>
<proteinExistence type="evidence at protein level"/>
<protein>
    <recommendedName>
        <fullName>Sorting nexin-32</fullName>
    </recommendedName>
    <alternativeName>
        <fullName>Sorting nexin-6B</fullName>
    </alternativeName>
</protein>
<evidence type="ECO:0000250" key="1"/>
<evidence type="ECO:0000255" key="2"/>
<evidence type="ECO:0000255" key="3">
    <source>
        <dbReference type="PROSITE-ProRule" id="PRU00147"/>
    </source>
</evidence>
<evidence type="ECO:0000269" key="4">
    <source>
    </source>
</evidence>
<evidence type="ECO:0000303" key="5">
    <source>
    </source>
</evidence>
<evidence type="ECO:0000305" key="6"/>
<evidence type="ECO:0007829" key="7">
    <source>
        <dbReference type="PDB" id="6E8R"/>
    </source>
</evidence>
<keyword id="KW-0002">3D-structure</keyword>
<keyword id="KW-0025">Alternative splicing</keyword>
<keyword id="KW-0175">Coiled coil</keyword>
<keyword id="KW-0653">Protein transport</keyword>
<keyword id="KW-1267">Proteomics identification</keyword>
<keyword id="KW-1185">Reference proteome</keyword>
<keyword id="KW-0813">Transport</keyword>
<reference key="1">
    <citation type="journal article" date="2004" name="Nat. Genet.">
        <title>Complete sequencing and characterization of 21,243 full-length human cDNAs.</title>
        <authorList>
            <person name="Ota T."/>
            <person name="Suzuki Y."/>
            <person name="Nishikawa T."/>
            <person name="Otsuki T."/>
            <person name="Sugiyama T."/>
            <person name="Irie R."/>
            <person name="Wakamatsu A."/>
            <person name="Hayashi K."/>
            <person name="Sato H."/>
            <person name="Nagai K."/>
            <person name="Kimura K."/>
            <person name="Makita H."/>
            <person name="Sekine M."/>
            <person name="Obayashi M."/>
            <person name="Nishi T."/>
            <person name="Shibahara T."/>
            <person name="Tanaka T."/>
            <person name="Ishii S."/>
            <person name="Yamamoto J."/>
            <person name="Saito K."/>
            <person name="Kawai Y."/>
            <person name="Isono Y."/>
            <person name="Nakamura Y."/>
            <person name="Nagahari K."/>
            <person name="Murakami K."/>
            <person name="Yasuda T."/>
            <person name="Iwayanagi T."/>
            <person name="Wagatsuma M."/>
            <person name="Shiratori A."/>
            <person name="Sudo H."/>
            <person name="Hosoiri T."/>
            <person name="Kaku Y."/>
            <person name="Kodaira H."/>
            <person name="Kondo H."/>
            <person name="Sugawara M."/>
            <person name="Takahashi M."/>
            <person name="Kanda K."/>
            <person name="Yokoi T."/>
            <person name="Furuya T."/>
            <person name="Kikkawa E."/>
            <person name="Omura Y."/>
            <person name="Abe K."/>
            <person name="Kamihara K."/>
            <person name="Katsuta N."/>
            <person name="Sato K."/>
            <person name="Tanikawa M."/>
            <person name="Yamazaki M."/>
            <person name="Ninomiya K."/>
            <person name="Ishibashi T."/>
            <person name="Yamashita H."/>
            <person name="Murakawa K."/>
            <person name="Fujimori K."/>
            <person name="Tanai H."/>
            <person name="Kimata M."/>
            <person name="Watanabe M."/>
            <person name="Hiraoka S."/>
            <person name="Chiba Y."/>
            <person name="Ishida S."/>
            <person name="Ono Y."/>
            <person name="Takiguchi S."/>
            <person name="Watanabe S."/>
            <person name="Yosida M."/>
            <person name="Hotuta T."/>
            <person name="Kusano J."/>
            <person name="Kanehori K."/>
            <person name="Takahashi-Fujii A."/>
            <person name="Hara H."/>
            <person name="Tanase T.-O."/>
            <person name="Nomura Y."/>
            <person name="Togiya S."/>
            <person name="Komai F."/>
            <person name="Hara R."/>
            <person name="Takeuchi K."/>
            <person name="Arita M."/>
            <person name="Imose N."/>
            <person name="Musashino K."/>
            <person name="Yuuki H."/>
            <person name="Oshima A."/>
            <person name="Sasaki N."/>
            <person name="Aotsuka S."/>
            <person name="Yoshikawa Y."/>
            <person name="Matsunawa H."/>
            <person name="Ichihara T."/>
            <person name="Shiohata N."/>
            <person name="Sano S."/>
            <person name="Moriya S."/>
            <person name="Momiyama H."/>
            <person name="Satoh N."/>
            <person name="Takami S."/>
            <person name="Terashima Y."/>
            <person name="Suzuki O."/>
            <person name="Nakagawa S."/>
            <person name="Senoh A."/>
            <person name="Mizoguchi H."/>
            <person name="Goto Y."/>
            <person name="Shimizu F."/>
            <person name="Wakebe H."/>
            <person name="Hishigaki H."/>
            <person name="Watanabe T."/>
            <person name="Sugiyama A."/>
            <person name="Takemoto M."/>
            <person name="Kawakami B."/>
            <person name="Yamazaki M."/>
            <person name="Watanabe K."/>
            <person name="Kumagai A."/>
            <person name="Itakura S."/>
            <person name="Fukuzumi Y."/>
            <person name="Fujimori Y."/>
            <person name="Komiyama M."/>
            <person name="Tashiro H."/>
            <person name="Tanigami A."/>
            <person name="Fujiwara T."/>
            <person name="Ono T."/>
            <person name="Yamada K."/>
            <person name="Fujii Y."/>
            <person name="Ozaki K."/>
            <person name="Hirao M."/>
            <person name="Ohmori Y."/>
            <person name="Kawabata A."/>
            <person name="Hikiji T."/>
            <person name="Kobatake N."/>
            <person name="Inagaki H."/>
            <person name="Ikema Y."/>
            <person name="Okamoto S."/>
            <person name="Okitani R."/>
            <person name="Kawakami T."/>
            <person name="Noguchi S."/>
            <person name="Itoh T."/>
            <person name="Shigeta K."/>
            <person name="Senba T."/>
            <person name="Matsumura K."/>
            <person name="Nakajima Y."/>
            <person name="Mizuno T."/>
            <person name="Morinaga M."/>
            <person name="Sasaki M."/>
            <person name="Togashi T."/>
            <person name="Oyama M."/>
            <person name="Hata H."/>
            <person name="Watanabe M."/>
            <person name="Komatsu T."/>
            <person name="Mizushima-Sugano J."/>
            <person name="Satoh T."/>
            <person name="Shirai Y."/>
            <person name="Takahashi Y."/>
            <person name="Nakagawa K."/>
            <person name="Okumura K."/>
            <person name="Nagase T."/>
            <person name="Nomura N."/>
            <person name="Kikuchi H."/>
            <person name="Masuho Y."/>
            <person name="Yamashita R."/>
            <person name="Nakai K."/>
            <person name="Yada T."/>
            <person name="Nakamura Y."/>
            <person name="Ohara O."/>
            <person name="Isogai T."/>
            <person name="Sugano S."/>
        </authorList>
    </citation>
    <scope>NUCLEOTIDE SEQUENCE [LARGE SCALE MRNA] (ISOFORMS 1 AND 2)</scope>
    <source>
        <tissue>Brain</tissue>
        <tissue>Brain cortex</tissue>
    </source>
</reference>
<reference key="2">
    <citation type="submission" date="2005-07" db="EMBL/GenBank/DDBJ databases">
        <authorList>
            <person name="Mural R.J."/>
            <person name="Istrail S."/>
            <person name="Sutton G.G."/>
            <person name="Florea L."/>
            <person name="Halpern A.L."/>
            <person name="Mobarry C.M."/>
            <person name="Lippert R."/>
            <person name="Walenz B."/>
            <person name="Shatkay H."/>
            <person name="Dew I."/>
            <person name="Miller J.R."/>
            <person name="Flanigan M.J."/>
            <person name="Edwards N.J."/>
            <person name="Bolanos R."/>
            <person name="Fasulo D."/>
            <person name="Halldorsson B.V."/>
            <person name="Hannenhalli S."/>
            <person name="Turner R."/>
            <person name="Yooseph S."/>
            <person name="Lu F."/>
            <person name="Nusskern D.R."/>
            <person name="Shue B.C."/>
            <person name="Zheng X.H."/>
            <person name="Zhong F."/>
            <person name="Delcher A.L."/>
            <person name="Huson D.H."/>
            <person name="Kravitz S.A."/>
            <person name="Mouchard L."/>
            <person name="Reinert K."/>
            <person name="Remington K.A."/>
            <person name="Clark A.G."/>
            <person name="Waterman M.S."/>
            <person name="Eichler E.E."/>
            <person name="Adams M.D."/>
            <person name="Hunkapiller M.W."/>
            <person name="Myers E.W."/>
            <person name="Venter J.C."/>
        </authorList>
    </citation>
    <scope>NUCLEOTIDE SEQUENCE [LARGE SCALE GENOMIC DNA]</scope>
</reference>
<reference key="3">
    <citation type="journal article" date="2004" name="Genome Res.">
        <title>The status, quality, and expansion of the NIH full-length cDNA project: the Mammalian Gene Collection (MGC).</title>
        <authorList>
            <consortium name="The MGC Project Team"/>
        </authorList>
    </citation>
    <scope>NUCLEOTIDE SEQUENCE [LARGE SCALE MRNA] (ISOFORM 1)</scope>
    <scope>VARIANTS ASN-155; VAL-282 AND TYR-354</scope>
    <source>
        <tissue>Brain</tissue>
    </source>
</reference>